<proteinExistence type="inferred from homology"/>
<accession>B7MGD1</accession>
<comment type="function">
    <text evidence="1">Confers resistance to chloramphenicol.</text>
</comment>
<comment type="subcellular location">
    <subcellularLocation>
        <location evidence="1">Cell inner membrane</location>
        <topology evidence="1">Multi-pass membrane protein</topology>
    </subcellularLocation>
</comment>
<comment type="similarity">
    <text evidence="1">Belongs to the major facilitator superfamily. DHA1 family. MdtL (TC 2.A.1.2.22) subfamily.</text>
</comment>
<evidence type="ECO:0000255" key="1">
    <source>
        <dbReference type="HAMAP-Rule" id="MF_01530"/>
    </source>
</evidence>
<keyword id="KW-0046">Antibiotic resistance</keyword>
<keyword id="KW-0997">Cell inner membrane</keyword>
<keyword id="KW-1003">Cell membrane</keyword>
<keyword id="KW-0472">Membrane</keyword>
<keyword id="KW-1185">Reference proteome</keyword>
<keyword id="KW-0812">Transmembrane</keyword>
<keyword id="KW-1133">Transmembrane helix</keyword>
<keyword id="KW-0813">Transport</keyword>
<name>MDTL_ECO45</name>
<feature type="chain" id="PRO_1000200821" description="Multidrug resistance protein MdtL">
    <location>
        <begin position="1"/>
        <end position="391"/>
    </location>
</feature>
<feature type="transmembrane region" description="Helical" evidence="1">
    <location>
        <begin position="4"/>
        <end position="24"/>
    </location>
</feature>
<feature type="transmembrane region" description="Helical" evidence="1">
    <location>
        <begin position="42"/>
        <end position="62"/>
    </location>
</feature>
<feature type="transmembrane region" description="Helical" evidence="1">
    <location>
        <begin position="69"/>
        <end position="89"/>
    </location>
</feature>
<feature type="transmembrane region" description="Helical" evidence="1">
    <location>
        <begin position="93"/>
        <end position="113"/>
    </location>
</feature>
<feature type="transmembrane region" description="Helical" evidence="1">
    <location>
        <begin position="131"/>
        <end position="151"/>
    </location>
</feature>
<feature type="transmembrane region" description="Helical" evidence="1">
    <location>
        <begin position="158"/>
        <end position="178"/>
    </location>
</feature>
<feature type="transmembrane region" description="Helical" evidence="1">
    <location>
        <begin position="203"/>
        <end position="222"/>
    </location>
</feature>
<feature type="transmembrane region" description="Helical" evidence="1">
    <location>
        <begin position="245"/>
        <end position="265"/>
    </location>
</feature>
<feature type="transmembrane region" description="Helical" evidence="1">
    <location>
        <begin position="269"/>
        <end position="289"/>
    </location>
</feature>
<feature type="transmembrane region" description="Helical" evidence="1">
    <location>
        <begin position="293"/>
        <end position="313"/>
    </location>
</feature>
<feature type="transmembrane region" description="Helical" evidence="1">
    <location>
        <begin position="331"/>
        <end position="351"/>
    </location>
</feature>
<feature type="transmembrane region" description="Helical" evidence="1">
    <location>
        <begin position="356"/>
        <end position="376"/>
    </location>
</feature>
<sequence>MSRFLICSFALVLLYPAGIDMYLVGLPRIAADLNASEAQLHIAFSVYLAGMAAAMLFAGKVADRSGRKPVAIPGAALFIIASVFCSLAETSALFLAGRFLQGLGAGCCYVVAFAILRDTLDDRRRAKVLSLLNGITCIIPVLAPVLGHLIMLKFPWQSLFWTMATMGIALLMLSLFILKETRPAAPTTSDKPRENSESLLNRFFLSRVVITTLSVSVILTFVNTSPVLLMEIMGFERGEYATIMALTAGVSMTVSFSTPFALGIFKPRTLMITSQVLFLAAGITLAVSPSHAVSLFGITLICAGFSVGFGVAMSQALGPFSLRAGVASSTLGIAQVCGSSLWIWLAAVVGIGAWNMLIGILIACSIVSLLLIMFVAPGRPVAAHEEIHHHA</sequence>
<organism>
    <name type="scientific">Escherichia coli O45:K1 (strain S88 / ExPEC)</name>
    <dbReference type="NCBI Taxonomy" id="585035"/>
    <lineage>
        <taxon>Bacteria</taxon>
        <taxon>Pseudomonadati</taxon>
        <taxon>Pseudomonadota</taxon>
        <taxon>Gammaproteobacteria</taxon>
        <taxon>Enterobacterales</taxon>
        <taxon>Enterobacteriaceae</taxon>
        <taxon>Escherichia</taxon>
    </lineage>
</organism>
<gene>
    <name evidence="1" type="primary">mdtL</name>
    <name type="ordered locus">ECS88_4133</name>
</gene>
<dbReference type="EMBL" id="CU928161">
    <property type="protein sequence ID" value="CAR05339.1"/>
    <property type="molecule type" value="Genomic_DNA"/>
</dbReference>
<dbReference type="RefSeq" id="WP_000085964.1">
    <property type="nucleotide sequence ID" value="NC_011742.1"/>
</dbReference>
<dbReference type="SMR" id="B7MGD1"/>
<dbReference type="KEGG" id="ecz:ECS88_4133"/>
<dbReference type="HOGENOM" id="CLU_001265_47_1_6"/>
<dbReference type="Proteomes" id="UP000000747">
    <property type="component" value="Chromosome"/>
</dbReference>
<dbReference type="GO" id="GO:0005886">
    <property type="term" value="C:plasma membrane"/>
    <property type="evidence" value="ECO:0007669"/>
    <property type="project" value="UniProtKB-SubCell"/>
</dbReference>
<dbReference type="GO" id="GO:0022857">
    <property type="term" value="F:transmembrane transporter activity"/>
    <property type="evidence" value="ECO:0007669"/>
    <property type="project" value="UniProtKB-UniRule"/>
</dbReference>
<dbReference type="GO" id="GO:0046677">
    <property type="term" value="P:response to antibiotic"/>
    <property type="evidence" value="ECO:0007669"/>
    <property type="project" value="UniProtKB-KW"/>
</dbReference>
<dbReference type="CDD" id="cd17320">
    <property type="entry name" value="MFS_MdfA_MDR_like"/>
    <property type="match status" value="1"/>
</dbReference>
<dbReference type="FunFam" id="1.20.1720.10:FF:000003">
    <property type="entry name" value="Multidrug resistance protein MdtL"/>
    <property type="match status" value="1"/>
</dbReference>
<dbReference type="Gene3D" id="1.20.1720.10">
    <property type="entry name" value="Multidrug resistance protein D"/>
    <property type="match status" value="1"/>
</dbReference>
<dbReference type="HAMAP" id="MF_01530">
    <property type="entry name" value="MFS_MdtL"/>
    <property type="match status" value="1"/>
</dbReference>
<dbReference type="InterPro" id="IPR011701">
    <property type="entry name" value="MFS"/>
</dbReference>
<dbReference type="InterPro" id="IPR020846">
    <property type="entry name" value="MFS_dom"/>
</dbReference>
<dbReference type="InterPro" id="IPR050189">
    <property type="entry name" value="MFS_Efflux_Transporters"/>
</dbReference>
<dbReference type="InterPro" id="IPR036259">
    <property type="entry name" value="MFS_trans_sf"/>
</dbReference>
<dbReference type="InterPro" id="IPR023697">
    <property type="entry name" value="Multidrug-R_MdtL"/>
</dbReference>
<dbReference type="NCBIfam" id="NF007782">
    <property type="entry name" value="PRK10473.1"/>
    <property type="match status" value="1"/>
</dbReference>
<dbReference type="PANTHER" id="PTHR43124:SF3">
    <property type="entry name" value="CHLORAMPHENICOL EFFLUX PUMP RV0191"/>
    <property type="match status" value="1"/>
</dbReference>
<dbReference type="PANTHER" id="PTHR43124">
    <property type="entry name" value="PURINE EFFLUX PUMP PBUE"/>
    <property type="match status" value="1"/>
</dbReference>
<dbReference type="Pfam" id="PF07690">
    <property type="entry name" value="MFS_1"/>
    <property type="match status" value="1"/>
</dbReference>
<dbReference type="SUPFAM" id="SSF103473">
    <property type="entry name" value="MFS general substrate transporter"/>
    <property type="match status" value="1"/>
</dbReference>
<dbReference type="PROSITE" id="PS50850">
    <property type="entry name" value="MFS"/>
    <property type="match status" value="1"/>
</dbReference>
<protein>
    <recommendedName>
        <fullName evidence="1">Multidrug resistance protein MdtL</fullName>
    </recommendedName>
</protein>
<reference key="1">
    <citation type="journal article" date="2009" name="PLoS Genet.">
        <title>Organised genome dynamics in the Escherichia coli species results in highly diverse adaptive paths.</title>
        <authorList>
            <person name="Touchon M."/>
            <person name="Hoede C."/>
            <person name="Tenaillon O."/>
            <person name="Barbe V."/>
            <person name="Baeriswyl S."/>
            <person name="Bidet P."/>
            <person name="Bingen E."/>
            <person name="Bonacorsi S."/>
            <person name="Bouchier C."/>
            <person name="Bouvet O."/>
            <person name="Calteau A."/>
            <person name="Chiapello H."/>
            <person name="Clermont O."/>
            <person name="Cruveiller S."/>
            <person name="Danchin A."/>
            <person name="Diard M."/>
            <person name="Dossat C."/>
            <person name="Karoui M.E."/>
            <person name="Frapy E."/>
            <person name="Garry L."/>
            <person name="Ghigo J.M."/>
            <person name="Gilles A.M."/>
            <person name="Johnson J."/>
            <person name="Le Bouguenec C."/>
            <person name="Lescat M."/>
            <person name="Mangenot S."/>
            <person name="Martinez-Jehanne V."/>
            <person name="Matic I."/>
            <person name="Nassif X."/>
            <person name="Oztas S."/>
            <person name="Petit M.A."/>
            <person name="Pichon C."/>
            <person name="Rouy Z."/>
            <person name="Ruf C.S."/>
            <person name="Schneider D."/>
            <person name="Tourret J."/>
            <person name="Vacherie B."/>
            <person name="Vallenet D."/>
            <person name="Medigue C."/>
            <person name="Rocha E.P.C."/>
            <person name="Denamur E."/>
        </authorList>
    </citation>
    <scope>NUCLEOTIDE SEQUENCE [LARGE SCALE GENOMIC DNA]</scope>
    <source>
        <strain>S88 / ExPEC</strain>
    </source>
</reference>